<reference key="1">
    <citation type="journal article" date="2002" name="Nature">
        <title>Comparison of the genomes of two Xanthomonas pathogens with differing host specificities.</title>
        <authorList>
            <person name="da Silva A.C.R."/>
            <person name="Ferro J.A."/>
            <person name="Reinach F.C."/>
            <person name="Farah C.S."/>
            <person name="Furlan L.R."/>
            <person name="Quaggio R.B."/>
            <person name="Monteiro-Vitorello C.B."/>
            <person name="Van Sluys M.A."/>
            <person name="Almeida N.F. Jr."/>
            <person name="Alves L.M.C."/>
            <person name="do Amaral A.M."/>
            <person name="Bertolini M.C."/>
            <person name="Camargo L.E.A."/>
            <person name="Camarotte G."/>
            <person name="Cannavan F."/>
            <person name="Cardozo J."/>
            <person name="Chambergo F."/>
            <person name="Ciapina L.P."/>
            <person name="Cicarelli R.M.B."/>
            <person name="Coutinho L.L."/>
            <person name="Cursino-Santos J.R."/>
            <person name="El-Dorry H."/>
            <person name="Faria J.B."/>
            <person name="Ferreira A.J.S."/>
            <person name="Ferreira R.C.C."/>
            <person name="Ferro M.I.T."/>
            <person name="Formighieri E.F."/>
            <person name="Franco M.C."/>
            <person name="Greggio C.C."/>
            <person name="Gruber A."/>
            <person name="Katsuyama A.M."/>
            <person name="Kishi L.T."/>
            <person name="Leite R.P."/>
            <person name="Lemos E.G.M."/>
            <person name="Lemos M.V.F."/>
            <person name="Locali E.C."/>
            <person name="Machado M.A."/>
            <person name="Madeira A.M.B.N."/>
            <person name="Martinez-Rossi N.M."/>
            <person name="Martins E.C."/>
            <person name="Meidanis J."/>
            <person name="Menck C.F.M."/>
            <person name="Miyaki C.Y."/>
            <person name="Moon D.H."/>
            <person name="Moreira L.M."/>
            <person name="Novo M.T.M."/>
            <person name="Okura V.K."/>
            <person name="Oliveira M.C."/>
            <person name="Oliveira V.R."/>
            <person name="Pereira H.A."/>
            <person name="Rossi A."/>
            <person name="Sena J.A.D."/>
            <person name="Silva C."/>
            <person name="de Souza R.F."/>
            <person name="Spinola L.A.F."/>
            <person name="Takita M.A."/>
            <person name="Tamura R.E."/>
            <person name="Teixeira E.C."/>
            <person name="Tezza R.I.D."/>
            <person name="Trindade dos Santos M."/>
            <person name="Truffi D."/>
            <person name="Tsai S.M."/>
            <person name="White F.F."/>
            <person name="Setubal J.C."/>
            <person name="Kitajima J.P."/>
        </authorList>
    </citation>
    <scope>NUCLEOTIDE SEQUENCE [LARGE SCALE GENOMIC DNA]</scope>
    <source>
        <strain>ATCC 33913 / DSM 3586 / NCPPB 528 / LMG 568 / P 25</strain>
    </source>
</reference>
<name>TYSY_XANCP</name>
<dbReference type="EC" id="2.1.1.45" evidence="1"/>
<dbReference type="EMBL" id="AE008922">
    <property type="protein sequence ID" value="AAM40102.1"/>
    <property type="molecule type" value="Genomic_DNA"/>
</dbReference>
<dbReference type="RefSeq" id="NP_636178.1">
    <property type="nucleotide sequence ID" value="NC_003902.1"/>
</dbReference>
<dbReference type="RefSeq" id="WP_011036023.1">
    <property type="nucleotide sequence ID" value="NC_003902.1"/>
</dbReference>
<dbReference type="SMR" id="Q8PCE7"/>
<dbReference type="STRING" id="190485.XCC0787"/>
<dbReference type="EnsemblBacteria" id="AAM40102">
    <property type="protein sequence ID" value="AAM40102"/>
    <property type="gene ID" value="XCC0787"/>
</dbReference>
<dbReference type="KEGG" id="xcc:XCC0787"/>
<dbReference type="PATRIC" id="fig|190485.4.peg.857"/>
<dbReference type="eggNOG" id="COG0207">
    <property type="taxonomic scope" value="Bacteria"/>
</dbReference>
<dbReference type="HOGENOM" id="CLU_021669_0_0_6"/>
<dbReference type="OrthoDB" id="9774633at2"/>
<dbReference type="UniPathway" id="UPA00575"/>
<dbReference type="Proteomes" id="UP000001010">
    <property type="component" value="Chromosome"/>
</dbReference>
<dbReference type="GO" id="GO:0005829">
    <property type="term" value="C:cytosol"/>
    <property type="evidence" value="ECO:0000318"/>
    <property type="project" value="GO_Central"/>
</dbReference>
<dbReference type="GO" id="GO:0004799">
    <property type="term" value="F:thymidylate synthase activity"/>
    <property type="evidence" value="ECO:0000318"/>
    <property type="project" value="GO_Central"/>
</dbReference>
<dbReference type="GO" id="GO:0006231">
    <property type="term" value="P:dTMP biosynthetic process"/>
    <property type="evidence" value="ECO:0000318"/>
    <property type="project" value="GO_Central"/>
</dbReference>
<dbReference type="GO" id="GO:0006235">
    <property type="term" value="P:dTTP biosynthetic process"/>
    <property type="evidence" value="ECO:0007669"/>
    <property type="project" value="UniProtKB-UniRule"/>
</dbReference>
<dbReference type="GO" id="GO:0032259">
    <property type="term" value="P:methylation"/>
    <property type="evidence" value="ECO:0007669"/>
    <property type="project" value="UniProtKB-KW"/>
</dbReference>
<dbReference type="CDD" id="cd00351">
    <property type="entry name" value="TS_Pyrimidine_HMase"/>
    <property type="match status" value="1"/>
</dbReference>
<dbReference type="FunFam" id="3.30.572.10:FF:000001">
    <property type="entry name" value="Thymidylate synthase"/>
    <property type="match status" value="1"/>
</dbReference>
<dbReference type="Gene3D" id="3.30.572.10">
    <property type="entry name" value="Thymidylate synthase/dCMP hydroxymethylase domain"/>
    <property type="match status" value="1"/>
</dbReference>
<dbReference type="HAMAP" id="MF_00008">
    <property type="entry name" value="Thymidy_synth_bact"/>
    <property type="match status" value="1"/>
</dbReference>
<dbReference type="InterPro" id="IPR045097">
    <property type="entry name" value="Thymidate_synth/dCMP_Mease"/>
</dbReference>
<dbReference type="InterPro" id="IPR023451">
    <property type="entry name" value="Thymidate_synth/dCMP_Mease_dom"/>
</dbReference>
<dbReference type="InterPro" id="IPR036926">
    <property type="entry name" value="Thymidate_synth/dCMP_Mease_sf"/>
</dbReference>
<dbReference type="InterPro" id="IPR000398">
    <property type="entry name" value="Thymidylate_synthase"/>
</dbReference>
<dbReference type="InterPro" id="IPR020940">
    <property type="entry name" value="Thymidylate_synthase_AS"/>
</dbReference>
<dbReference type="NCBIfam" id="NF002497">
    <property type="entry name" value="PRK01827.1-3"/>
    <property type="match status" value="1"/>
</dbReference>
<dbReference type="NCBIfam" id="NF002499">
    <property type="entry name" value="PRK01827.1-5"/>
    <property type="match status" value="1"/>
</dbReference>
<dbReference type="NCBIfam" id="TIGR03284">
    <property type="entry name" value="thym_sym"/>
    <property type="match status" value="2"/>
</dbReference>
<dbReference type="PANTHER" id="PTHR11548:SF9">
    <property type="entry name" value="THYMIDYLATE SYNTHASE"/>
    <property type="match status" value="1"/>
</dbReference>
<dbReference type="PANTHER" id="PTHR11548">
    <property type="entry name" value="THYMIDYLATE SYNTHASE 1"/>
    <property type="match status" value="1"/>
</dbReference>
<dbReference type="Pfam" id="PF00303">
    <property type="entry name" value="Thymidylat_synt"/>
    <property type="match status" value="1"/>
</dbReference>
<dbReference type="PRINTS" id="PR00108">
    <property type="entry name" value="THYMDSNTHASE"/>
</dbReference>
<dbReference type="SUPFAM" id="SSF55831">
    <property type="entry name" value="Thymidylate synthase/dCMP hydroxymethylase"/>
    <property type="match status" value="1"/>
</dbReference>
<dbReference type="PROSITE" id="PS00091">
    <property type="entry name" value="THYMIDYLATE_SYNTHASE"/>
    <property type="match status" value="1"/>
</dbReference>
<comment type="function">
    <text evidence="1">Catalyzes the reductive methylation of 2'-deoxyuridine-5'-monophosphate (dUMP) to 2'-deoxythymidine-5'-monophosphate (dTMP) while utilizing 5,10-methylenetetrahydrofolate (mTHF) as the methyl donor and reductant in the reaction, yielding dihydrofolate (DHF) as a by-product. This enzymatic reaction provides an intracellular de novo source of dTMP, an essential precursor for DNA biosynthesis.</text>
</comment>
<comment type="catalytic activity">
    <reaction evidence="1">
        <text>dUMP + (6R)-5,10-methylene-5,6,7,8-tetrahydrofolate = 7,8-dihydrofolate + dTMP</text>
        <dbReference type="Rhea" id="RHEA:12104"/>
        <dbReference type="ChEBI" id="CHEBI:15636"/>
        <dbReference type="ChEBI" id="CHEBI:57451"/>
        <dbReference type="ChEBI" id="CHEBI:63528"/>
        <dbReference type="ChEBI" id="CHEBI:246422"/>
        <dbReference type="EC" id="2.1.1.45"/>
    </reaction>
</comment>
<comment type="pathway">
    <text evidence="1">Pyrimidine metabolism; dTTP biosynthesis.</text>
</comment>
<comment type="subunit">
    <text evidence="1">Homodimer.</text>
</comment>
<comment type="subcellular location">
    <subcellularLocation>
        <location evidence="1">Cytoplasm</location>
    </subcellularLocation>
</comment>
<comment type="similarity">
    <text evidence="1">Belongs to the thymidylate synthase family. Bacterial-type ThyA subfamily.</text>
</comment>
<sequence>MKPYLELLQHVLEYGAEKSDRTGTGTRSVFGWQMRFDLNAGFPLVTTKKLHLRSIIHELLWFLQGDTNIAYLKDNQVRIWDEWADANGDLGPVYGKQWRRWTGPDGVEIDQMQWLVDEIKRNPDSRRLVISAWNVGELPQMALMPCHSLFQFYVVDGKLSCQLYQRSGDIFLGVPFNIASYALLTHMVAQATGLGVGDFVHTLGDAHLYSNHFEQAREQLTRTPRPLPTLRLNPDVTDLFAFRFEDIAIDGYDPHPAIKAPVAV</sequence>
<feature type="chain" id="PRO_0000141046" description="Thymidylate synthase">
    <location>
        <begin position="1"/>
        <end position="264"/>
    </location>
</feature>
<feature type="active site" description="Nucleophile" evidence="1">
    <location>
        <position position="146"/>
    </location>
</feature>
<feature type="binding site" description="in other chain" evidence="1">
    <location>
        <position position="21"/>
    </location>
    <ligand>
        <name>dUMP</name>
        <dbReference type="ChEBI" id="CHEBI:246422"/>
        <note>ligand shared between dimeric partners</note>
    </ligand>
</feature>
<feature type="binding site" evidence="1">
    <location>
        <position position="51"/>
    </location>
    <ligand>
        <name>(6R)-5,10-methylene-5,6,7,8-tetrahydrofolate</name>
        <dbReference type="ChEBI" id="CHEBI:15636"/>
    </ligand>
</feature>
<feature type="binding site" evidence="1">
    <location>
        <begin position="126"/>
        <end position="127"/>
    </location>
    <ligand>
        <name>dUMP</name>
        <dbReference type="ChEBI" id="CHEBI:246422"/>
        <note>ligand shared between dimeric partners</note>
    </ligand>
</feature>
<feature type="binding site" description="in other chain" evidence="1">
    <location>
        <begin position="166"/>
        <end position="169"/>
    </location>
    <ligand>
        <name>dUMP</name>
        <dbReference type="ChEBI" id="CHEBI:246422"/>
        <note>ligand shared between dimeric partners</note>
    </ligand>
</feature>
<feature type="binding site" evidence="1">
    <location>
        <position position="169"/>
    </location>
    <ligand>
        <name>(6R)-5,10-methylene-5,6,7,8-tetrahydrofolate</name>
        <dbReference type="ChEBI" id="CHEBI:15636"/>
    </ligand>
</feature>
<feature type="binding site" description="in other chain" evidence="1">
    <location>
        <position position="177"/>
    </location>
    <ligand>
        <name>dUMP</name>
        <dbReference type="ChEBI" id="CHEBI:246422"/>
        <note>ligand shared between dimeric partners</note>
    </ligand>
</feature>
<feature type="binding site" description="in other chain" evidence="1">
    <location>
        <begin position="207"/>
        <end position="209"/>
    </location>
    <ligand>
        <name>dUMP</name>
        <dbReference type="ChEBI" id="CHEBI:246422"/>
        <note>ligand shared between dimeric partners</note>
    </ligand>
</feature>
<feature type="binding site" evidence="1">
    <location>
        <position position="263"/>
    </location>
    <ligand>
        <name>(6R)-5,10-methylene-5,6,7,8-tetrahydrofolate</name>
        <dbReference type="ChEBI" id="CHEBI:15636"/>
    </ligand>
</feature>
<gene>
    <name evidence="1" type="primary">thyA</name>
    <name type="ordered locus">XCC0787</name>
</gene>
<proteinExistence type="inferred from homology"/>
<organism>
    <name type="scientific">Xanthomonas campestris pv. campestris (strain ATCC 33913 / DSM 3586 / NCPPB 528 / LMG 568 / P 25)</name>
    <dbReference type="NCBI Taxonomy" id="190485"/>
    <lineage>
        <taxon>Bacteria</taxon>
        <taxon>Pseudomonadati</taxon>
        <taxon>Pseudomonadota</taxon>
        <taxon>Gammaproteobacteria</taxon>
        <taxon>Lysobacterales</taxon>
        <taxon>Lysobacteraceae</taxon>
        <taxon>Xanthomonas</taxon>
    </lineage>
</organism>
<evidence type="ECO:0000255" key="1">
    <source>
        <dbReference type="HAMAP-Rule" id="MF_00008"/>
    </source>
</evidence>
<accession>Q8PCE7</accession>
<keyword id="KW-0963">Cytoplasm</keyword>
<keyword id="KW-0489">Methyltransferase</keyword>
<keyword id="KW-0545">Nucleotide biosynthesis</keyword>
<keyword id="KW-1185">Reference proteome</keyword>
<keyword id="KW-0808">Transferase</keyword>
<protein>
    <recommendedName>
        <fullName evidence="1">Thymidylate synthase</fullName>
        <shortName evidence="1">TS</shortName>
        <shortName evidence="1">TSase</shortName>
        <ecNumber evidence="1">2.1.1.45</ecNumber>
    </recommendedName>
</protein>